<sequence length="333" mass="37986">MVNRRNYNYSMINQTCRVRNPARKARARLVLLQTGTWIFVPFPINVPVANIIHVPNTNIFVLTSSMILYFFRRFLFSRSASTSKSIYFASMRFREVLSVCLSPWSLWTRSKALISASPHFSPSSAHSASVFPCPASSATPARPSAPFPPWGAGATQDAVSPSCSASNSITPCRSCTRGRAKRAVRAERQGWLWVEDEKQIAVVGHEWREGAICDAERVKLCYKEKRWVGNIIKQPKWYIKTKNTYTVTPPIRRRSSKRLTTGTRRCRSIQVSLFCDLLSYTAAFRPTRASRTATRGHKKLRFLYGWAYRLLELSRDVYANEQCERVSVRTANQ</sequence>
<feature type="chain" id="PRO_0000406592" description="Uncharacterized gene 9 protein">
    <location>
        <begin position="1"/>
        <end position="333"/>
    </location>
</feature>
<name>VG09_GAHVM</name>
<gene>
    <name type="primary">MDV009</name>
</gene>
<organismHost>
    <name type="scientific">Gallus gallus</name>
    <name type="common">Chicken</name>
    <dbReference type="NCBI Taxonomy" id="9031"/>
</organismHost>
<accession>Q9E6R5</accession>
<proteinExistence type="predicted"/>
<protein>
    <recommendedName>
        <fullName>Uncharacterized gene 9 protein</fullName>
    </recommendedName>
</protein>
<dbReference type="EMBL" id="AF243438">
    <property type="protein sequence ID" value="AAG14189.1"/>
    <property type="molecule type" value="Genomic_DNA"/>
</dbReference>
<dbReference type="SMR" id="Q9E6R5"/>
<dbReference type="Proteomes" id="UP000008072">
    <property type="component" value="Segment"/>
</dbReference>
<reference key="1">
    <citation type="journal article" date="2000" name="J. Virol.">
        <title>The genome of a very virulent Marek's disease virus.</title>
        <authorList>
            <person name="Tulman E.R."/>
            <person name="Afonso C.L."/>
            <person name="Lu Z."/>
            <person name="Zsak L."/>
            <person name="Rock D.L."/>
            <person name="Kutish G.F."/>
        </authorList>
    </citation>
    <scope>NUCLEOTIDE SEQUENCE [LARGE SCALE GENOMIC DNA]</scope>
</reference>
<organism>
    <name type="scientific">Gallid herpesvirus 2 (strain Chicken/Md5/ATCC VR-987)</name>
    <name type="common">GaHV-2</name>
    <name type="synonym">Marek's disease herpesvirus type 1</name>
    <dbReference type="NCBI Taxonomy" id="10389"/>
    <lineage>
        <taxon>Viruses</taxon>
        <taxon>Duplodnaviria</taxon>
        <taxon>Heunggongvirae</taxon>
        <taxon>Peploviricota</taxon>
        <taxon>Herviviricetes</taxon>
        <taxon>Herpesvirales</taxon>
        <taxon>Orthoherpesviridae</taxon>
        <taxon>Alphaherpesvirinae</taxon>
        <taxon>Mardivirus</taxon>
        <taxon>Mardivirus gallidalpha2</taxon>
        <taxon>Gallid alphaherpesvirus 2</taxon>
    </lineage>
</organism>
<keyword id="KW-1185">Reference proteome</keyword>